<comment type="similarity">
    <text evidence="1">Belongs to the universal ribosomal protein uS9 family.</text>
</comment>
<gene>
    <name evidence="1" type="primary">rpsI</name>
    <name type="ordered locus">EFER_3201</name>
</gene>
<keyword id="KW-0687">Ribonucleoprotein</keyword>
<keyword id="KW-0689">Ribosomal protein</keyword>
<accession>B7LRJ8</accession>
<sequence>MAENQYYGTGRRKSSAARVFIKPGNGKIVINQRSLEQYFGRETARMVVRQPLELVDMVEKLDLYITVKGGGISGQAGAIRHGITRALMEYDESLRGELRKAGFVTRDARQVERKKVGLRKARRRPQFSKR</sequence>
<evidence type="ECO:0000255" key="1">
    <source>
        <dbReference type="HAMAP-Rule" id="MF_00532"/>
    </source>
</evidence>
<evidence type="ECO:0000305" key="2"/>
<proteinExistence type="inferred from homology"/>
<feature type="chain" id="PRO_1000128125" description="Small ribosomal subunit protein uS9">
    <location>
        <begin position="1"/>
        <end position="130"/>
    </location>
</feature>
<name>RS9_ESCF3</name>
<protein>
    <recommendedName>
        <fullName evidence="1">Small ribosomal subunit protein uS9</fullName>
    </recommendedName>
    <alternativeName>
        <fullName evidence="2">30S ribosomal protein S9</fullName>
    </alternativeName>
</protein>
<reference key="1">
    <citation type="journal article" date="2009" name="PLoS Genet.">
        <title>Organised genome dynamics in the Escherichia coli species results in highly diverse adaptive paths.</title>
        <authorList>
            <person name="Touchon M."/>
            <person name="Hoede C."/>
            <person name="Tenaillon O."/>
            <person name="Barbe V."/>
            <person name="Baeriswyl S."/>
            <person name="Bidet P."/>
            <person name="Bingen E."/>
            <person name="Bonacorsi S."/>
            <person name="Bouchier C."/>
            <person name="Bouvet O."/>
            <person name="Calteau A."/>
            <person name="Chiapello H."/>
            <person name="Clermont O."/>
            <person name="Cruveiller S."/>
            <person name="Danchin A."/>
            <person name="Diard M."/>
            <person name="Dossat C."/>
            <person name="Karoui M.E."/>
            <person name="Frapy E."/>
            <person name="Garry L."/>
            <person name="Ghigo J.M."/>
            <person name="Gilles A.M."/>
            <person name="Johnson J."/>
            <person name="Le Bouguenec C."/>
            <person name="Lescat M."/>
            <person name="Mangenot S."/>
            <person name="Martinez-Jehanne V."/>
            <person name="Matic I."/>
            <person name="Nassif X."/>
            <person name="Oztas S."/>
            <person name="Petit M.A."/>
            <person name="Pichon C."/>
            <person name="Rouy Z."/>
            <person name="Ruf C.S."/>
            <person name="Schneider D."/>
            <person name="Tourret J."/>
            <person name="Vacherie B."/>
            <person name="Vallenet D."/>
            <person name="Medigue C."/>
            <person name="Rocha E.P.C."/>
            <person name="Denamur E."/>
        </authorList>
    </citation>
    <scope>NUCLEOTIDE SEQUENCE [LARGE SCALE GENOMIC DNA]</scope>
    <source>
        <strain>ATCC 35469 / DSM 13698 / BCRC 15582 / CCUG 18766 / IAM 14443 / JCM 21226 / LMG 7866 / NBRC 102419 / NCTC 12128 / CDC 0568-73</strain>
    </source>
</reference>
<dbReference type="EMBL" id="CU928158">
    <property type="protein sequence ID" value="CAQ90694.1"/>
    <property type="molecule type" value="Genomic_DNA"/>
</dbReference>
<dbReference type="RefSeq" id="WP_000829815.1">
    <property type="nucleotide sequence ID" value="NC_011740.1"/>
</dbReference>
<dbReference type="SMR" id="B7LRJ8"/>
<dbReference type="GeneID" id="97393262"/>
<dbReference type="KEGG" id="efe:EFER_3201"/>
<dbReference type="HOGENOM" id="CLU_046483_2_1_6"/>
<dbReference type="OrthoDB" id="9803965at2"/>
<dbReference type="Proteomes" id="UP000000745">
    <property type="component" value="Chromosome"/>
</dbReference>
<dbReference type="GO" id="GO:0022627">
    <property type="term" value="C:cytosolic small ribosomal subunit"/>
    <property type="evidence" value="ECO:0007669"/>
    <property type="project" value="TreeGrafter"/>
</dbReference>
<dbReference type="GO" id="GO:0003723">
    <property type="term" value="F:RNA binding"/>
    <property type="evidence" value="ECO:0007669"/>
    <property type="project" value="TreeGrafter"/>
</dbReference>
<dbReference type="GO" id="GO:0003735">
    <property type="term" value="F:structural constituent of ribosome"/>
    <property type="evidence" value="ECO:0007669"/>
    <property type="project" value="InterPro"/>
</dbReference>
<dbReference type="GO" id="GO:0006412">
    <property type="term" value="P:translation"/>
    <property type="evidence" value="ECO:0007669"/>
    <property type="project" value="UniProtKB-UniRule"/>
</dbReference>
<dbReference type="FunFam" id="3.30.230.10:FF:000001">
    <property type="entry name" value="30S ribosomal protein S9"/>
    <property type="match status" value="1"/>
</dbReference>
<dbReference type="Gene3D" id="3.30.230.10">
    <property type="match status" value="1"/>
</dbReference>
<dbReference type="HAMAP" id="MF_00532_B">
    <property type="entry name" value="Ribosomal_uS9_B"/>
    <property type="match status" value="1"/>
</dbReference>
<dbReference type="InterPro" id="IPR020568">
    <property type="entry name" value="Ribosomal_Su5_D2-typ_SF"/>
</dbReference>
<dbReference type="InterPro" id="IPR000754">
    <property type="entry name" value="Ribosomal_uS9"/>
</dbReference>
<dbReference type="InterPro" id="IPR023035">
    <property type="entry name" value="Ribosomal_uS9_bac/plastid"/>
</dbReference>
<dbReference type="InterPro" id="IPR020574">
    <property type="entry name" value="Ribosomal_uS9_CS"/>
</dbReference>
<dbReference type="InterPro" id="IPR014721">
    <property type="entry name" value="Ribsml_uS5_D2-typ_fold_subgr"/>
</dbReference>
<dbReference type="NCBIfam" id="NF001099">
    <property type="entry name" value="PRK00132.1"/>
    <property type="match status" value="1"/>
</dbReference>
<dbReference type="PANTHER" id="PTHR21569">
    <property type="entry name" value="RIBOSOMAL PROTEIN S9"/>
    <property type="match status" value="1"/>
</dbReference>
<dbReference type="PANTHER" id="PTHR21569:SF1">
    <property type="entry name" value="SMALL RIBOSOMAL SUBUNIT PROTEIN US9M"/>
    <property type="match status" value="1"/>
</dbReference>
<dbReference type="Pfam" id="PF00380">
    <property type="entry name" value="Ribosomal_S9"/>
    <property type="match status" value="1"/>
</dbReference>
<dbReference type="SUPFAM" id="SSF54211">
    <property type="entry name" value="Ribosomal protein S5 domain 2-like"/>
    <property type="match status" value="1"/>
</dbReference>
<dbReference type="PROSITE" id="PS00360">
    <property type="entry name" value="RIBOSOMAL_S9"/>
    <property type="match status" value="1"/>
</dbReference>
<organism>
    <name type="scientific">Escherichia fergusonii (strain ATCC 35469 / DSM 13698 / CCUG 18766 / IAM 14443 / JCM 21226 / LMG 7866 / NBRC 102419 / NCTC 12128 / CDC 0568-73)</name>
    <dbReference type="NCBI Taxonomy" id="585054"/>
    <lineage>
        <taxon>Bacteria</taxon>
        <taxon>Pseudomonadati</taxon>
        <taxon>Pseudomonadota</taxon>
        <taxon>Gammaproteobacteria</taxon>
        <taxon>Enterobacterales</taxon>
        <taxon>Enterobacteriaceae</taxon>
        <taxon>Escherichia</taxon>
    </lineage>
</organism>